<keyword id="KW-0648">Protein biosynthesis</keyword>
<keyword id="KW-0808">Transferase</keyword>
<protein>
    <recommendedName>
        <fullName evidence="1">Methionyl-tRNA formyltransferase</fullName>
        <ecNumber evidence="1">2.1.2.9</ecNumber>
    </recommendedName>
</protein>
<organism>
    <name type="scientific">Rickettsia bellii (strain RML369-C)</name>
    <dbReference type="NCBI Taxonomy" id="336407"/>
    <lineage>
        <taxon>Bacteria</taxon>
        <taxon>Pseudomonadati</taxon>
        <taxon>Pseudomonadota</taxon>
        <taxon>Alphaproteobacteria</taxon>
        <taxon>Rickettsiales</taxon>
        <taxon>Rickettsiaceae</taxon>
        <taxon>Rickettsieae</taxon>
        <taxon>Rickettsia</taxon>
        <taxon>belli group</taxon>
    </lineage>
</organism>
<sequence>MKIIFMGTPEFAVPALTKLINSNHKVVAAFTQPPKAKGRGLSETKSPIHQLADEAQIPVYTPTTLRNEEAANLINNIDADIIVVIAYGFIIPQNILDAKKYGCLNIHPSDLPRHRGAAPLQRTIIEGDKTSSVCIMQMDAGLDTGDILMKEDFDLPKKITLQELHDKCANLGAELLIKTLANIDKIVPKPQSNEGVTYTHKLTKEEGRVNWQDSAFSINCKVRGMNPWPGVYFKYNDKTIKILEAEYSDEEHNFTPGTIINKNLEIACGKGILMIKKLQQEGKKVLNIEEFLRGFKTPVINKVQ</sequence>
<accession>Q1RJ22</accession>
<dbReference type="EC" id="2.1.2.9" evidence="1"/>
<dbReference type="EMBL" id="CP000087">
    <property type="protein sequence ID" value="ABE04642.1"/>
    <property type="molecule type" value="Genomic_DNA"/>
</dbReference>
<dbReference type="RefSeq" id="WP_011477231.1">
    <property type="nucleotide sequence ID" value="NC_007940.1"/>
</dbReference>
<dbReference type="SMR" id="Q1RJ22"/>
<dbReference type="KEGG" id="rbe:RBE_0561"/>
<dbReference type="eggNOG" id="COG0223">
    <property type="taxonomic scope" value="Bacteria"/>
</dbReference>
<dbReference type="HOGENOM" id="CLU_033347_1_1_5"/>
<dbReference type="OrthoDB" id="9802815at2"/>
<dbReference type="Proteomes" id="UP000001951">
    <property type="component" value="Chromosome"/>
</dbReference>
<dbReference type="GO" id="GO:0005829">
    <property type="term" value="C:cytosol"/>
    <property type="evidence" value="ECO:0007669"/>
    <property type="project" value="TreeGrafter"/>
</dbReference>
<dbReference type="GO" id="GO:0004479">
    <property type="term" value="F:methionyl-tRNA formyltransferase activity"/>
    <property type="evidence" value="ECO:0007669"/>
    <property type="project" value="UniProtKB-UniRule"/>
</dbReference>
<dbReference type="CDD" id="cd08646">
    <property type="entry name" value="FMT_core_Met-tRNA-FMT_N"/>
    <property type="match status" value="1"/>
</dbReference>
<dbReference type="CDD" id="cd08704">
    <property type="entry name" value="Met_tRNA_FMT_C"/>
    <property type="match status" value="1"/>
</dbReference>
<dbReference type="Gene3D" id="3.40.50.12230">
    <property type="match status" value="1"/>
</dbReference>
<dbReference type="HAMAP" id="MF_00182">
    <property type="entry name" value="Formyl_trans"/>
    <property type="match status" value="1"/>
</dbReference>
<dbReference type="InterPro" id="IPR005794">
    <property type="entry name" value="Fmt"/>
</dbReference>
<dbReference type="InterPro" id="IPR005793">
    <property type="entry name" value="Formyl_trans_C"/>
</dbReference>
<dbReference type="InterPro" id="IPR002376">
    <property type="entry name" value="Formyl_transf_N"/>
</dbReference>
<dbReference type="InterPro" id="IPR036477">
    <property type="entry name" value="Formyl_transf_N_sf"/>
</dbReference>
<dbReference type="InterPro" id="IPR011034">
    <property type="entry name" value="Formyl_transferase-like_C_sf"/>
</dbReference>
<dbReference type="InterPro" id="IPR044135">
    <property type="entry name" value="Met-tRNA-FMT_C"/>
</dbReference>
<dbReference type="InterPro" id="IPR041711">
    <property type="entry name" value="Met-tRNA-FMT_N"/>
</dbReference>
<dbReference type="NCBIfam" id="TIGR00460">
    <property type="entry name" value="fmt"/>
    <property type="match status" value="1"/>
</dbReference>
<dbReference type="PANTHER" id="PTHR11138">
    <property type="entry name" value="METHIONYL-TRNA FORMYLTRANSFERASE"/>
    <property type="match status" value="1"/>
</dbReference>
<dbReference type="PANTHER" id="PTHR11138:SF5">
    <property type="entry name" value="METHIONYL-TRNA FORMYLTRANSFERASE, MITOCHONDRIAL"/>
    <property type="match status" value="1"/>
</dbReference>
<dbReference type="Pfam" id="PF02911">
    <property type="entry name" value="Formyl_trans_C"/>
    <property type="match status" value="1"/>
</dbReference>
<dbReference type="Pfam" id="PF00551">
    <property type="entry name" value="Formyl_trans_N"/>
    <property type="match status" value="1"/>
</dbReference>
<dbReference type="SUPFAM" id="SSF50486">
    <property type="entry name" value="FMT C-terminal domain-like"/>
    <property type="match status" value="1"/>
</dbReference>
<dbReference type="SUPFAM" id="SSF53328">
    <property type="entry name" value="Formyltransferase"/>
    <property type="match status" value="1"/>
</dbReference>
<gene>
    <name evidence="1" type="primary">fmt</name>
    <name type="ordered locus">RBE_0561</name>
</gene>
<feature type="chain" id="PRO_0000277990" description="Methionyl-tRNA formyltransferase">
    <location>
        <begin position="1"/>
        <end position="304"/>
    </location>
</feature>
<feature type="binding site" evidence="1">
    <location>
        <begin position="109"/>
        <end position="112"/>
    </location>
    <ligand>
        <name>(6S)-5,6,7,8-tetrahydrofolate</name>
        <dbReference type="ChEBI" id="CHEBI:57453"/>
    </ligand>
</feature>
<comment type="function">
    <text evidence="1">Attaches a formyl group to the free amino group of methionyl-tRNA(fMet). The formyl group appears to play a dual role in the initiator identity of N-formylmethionyl-tRNA by promoting its recognition by IF2 and preventing the misappropriation of this tRNA by the elongation apparatus.</text>
</comment>
<comment type="catalytic activity">
    <reaction evidence="1">
        <text>L-methionyl-tRNA(fMet) + (6R)-10-formyltetrahydrofolate = N-formyl-L-methionyl-tRNA(fMet) + (6S)-5,6,7,8-tetrahydrofolate + H(+)</text>
        <dbReference type="Rhea" id="RHEA:24380"/>
        <dbReference type="Rhea" id="RHEA-COMP:9952"/>
        <dbReference type="Rhea" id="RHEA-COMP:9953"/>
        <dbReference type="ChEBI" id="CHEBI:15378"/>
        <dbReference type="ChEBI" id="CHEBI:57453"/>
        <dbReference type="ChEBI" id="CHEBI:78530"/>
        <dbReference type="ChEBI" id="CHEBI:78844"/>
        <dbReference type="ChEBI" id="CHEBI:195366"/>
        <dbReference type="EC" id="2.1.2.9"/>
    </reaction>
</comment>
<comment type="similarity">
    <text evidence="1">Belongs to the Fmt family.</text>
</comment>
<name>FMT_RICBR</name>
<proteinExistence type="inferred from homology"/>
<evidence type="ECO:0000255" key="1">
    <source>
        <dbReference type="HAMAP-Rule" id="MF_00182"/>
    </source>
</evidence>
<reference key="1">
    <citation type="journal article" date="2006" name="PLoS Genet.">
        <title>Genome sequence of Rickettsia bellii illuminates the role of amoebae in gene exchanges between intracellular pathogens.</title>
        <authorList>
            <person name="Ogata H."/>
            <person name="La Scola B."/>
            <person name="Audic S."/>
            <person name="Renesto P."/>
            <person name="Blanc G."/>
            <person name="Robert C."/>
            <person name="Fournier P.-E."/>
            <person name="Claverie J.-M."/>
            <person name="Raoult D."/>
        </authorList>
    </citation>
    <scope>NUCLEOTIDE SEQUENCE [LARGE SCALE GENOMIC DNA]</scope>
    <source>
        <strain>RML369-C</strain>
    </source>
</reference>